<evidence type="ECO:0000255" key="1">
    <source>
        <dbReference type="PROSITE-ProRule" id="PRU00464"/>
    </source>
</evidence>
<evidence type="ECO:0000305" key="2"/>
<name>YHIT_CHLPN</name>
<dbReference type="EMBL" id="AE001363">
    <property type="protein sequence ID" value="AAD18628.1"/>
    <property type="molecule type" value="Genomic_DNA"/>
</dbReference>
<dbReference type="EMBL" id="AE002161">
    <property type="protein sequence ID" value="AAF73650.1"/>
    <property type="status" value="ALT_INIT"/>
    <property type="molecule type" value="Genomic_DNA"/>
</dbReference>
<dbReference type="EMBL" id="BA000008">
    <property type="protein sequence ID" value="BAA98694.1"/>
    <property type="molecule type" value="Genomic_DNA"/>
</dbReference>
<dbReference type="EMBL" id="AE009440">
    <property type="protein sequence ID" value="AAP98437.1"/>
    <property type="molecule type" value="Genomic_DNA"/>
</dbReference>
<dbReference type="PIR" id="D86551">
    <property type="entry name" value="D86551"/>
</dbReference>
<dbReference type="PIR" id="G72071">
    <property type="entry name" value="G72071"/>
</dbReference>
<dbReference type="RefSeq" id="NP_224684.1">
    <property type="nucleotide sequence ID" value="NC_000922.1"/>
</dbReference>
<dbReference type="RefSeq" id="WP_010883126.1">
    <property type="nucleotide sequence ID" value="NZ_LN847257.1"/>
</dbReference>
<dbReference type="SMR" id="Q9Z863"/>
<dbReference type="STRING" id="406984.CPK_ORF01005"/>
<dbReference type="GeneID" id="45050533"/>
<dbReference type="KEGG" id="cpa:CP_0266"/>
<dbReference type="KEGG" id="cpj:ycfF"/>
<dbReference type="KEGG" id="cpn:CPn_0488"/>
<dbReference type="KEGG" id="cpt:CpB0508"/>
<dbReference type="PATRIC" id="fig|115713.3.peg.547"/>
<dbReference type="eggNOG" id="COG0537">
    <property type="taxonomic scope" value="Bacteria"/>
</dbReference>
<dbReference type="HOGENOM" id="CLU_056776_8_1_0"/>
<dbReference type="OrthoDB" id="9784774at2"/>
<dbReference type="Proteomes" id="UP000000583">
    <property type="component" value="Chromosome"/>
</dbReference>
<dbReference type="Proteomes" id="UP000000801">
    <property type="component" value="Chromosome"/>
</dbReference>
<dbReference type="GO" id="GO:0003824">
    <property type="term" value="F:catalytic activity"/>
    <property type="evidence" value="ECO:0007669"/>
    <property type="project" value="InterPro"/>
</dbReference>
<dbReference type="CDD" id="cd01276">
    <property type="entry name" value="PKCI_related"/>
    <property type="match status" value="1"/>
</dbReference>
<dbReference type="Gene3D" id="3.30.428.10">
    <property type="entry name" value="HIT-like"/>
    <property type="match status" value="1"/>
</dbReference>
<dbReference type="InterPro" id="IPR019808">
    <property type="entry name" value="Histidine_triad_CS"/>
</dbReference>
<dbReference type="InterPro" id="IPR001310">
    <property type="entry name" value="Histidine_triad_HIT"/>
</dbReference>
<dbReference type="InterPro" id="IPR011146">
    <property type="entry name" value="HIT-like"/>
</dbReference>
<dbReference type="InterPro" id="IPR036265">
    <property type="entry name" value="HIT-like_sf"/>
</dbReference>
<dbReference type="PANTHER" id="PTHR23089">
    <property type="entry name" value="HISTIDINE TRIAD HIT PROTEIN"/>
    <property type="match status" value="1"/>
</dbReference>
<dbReference type="Pfam" id="PF01230">
    <property type="entry name" value="HIT"/>
    <property type="match status" value="1"/>
</dbReference>
<dbReference type="PRINTS" id="PR00332">
    <property type="entry name" value="HISTRIAD"/>
</dbReference>
<dbReference type="SUPFAM" id="SSF54197">
    <property type="entry name" value="HIT-like"/>
    <property type="match status" value="1"/>
</dbReference>
<dbReference type="PROSITE" id="PS00892">
    <property type="entry name" value="HIT_1"/>
    <property type="match status" value="1"/>
</dbReference>
<dbReference type="PROSITE" id="PS51084">
    <property type="entry name" value="HIT_2"/>
    <property type="match status" value="1"/>
</dbReference>
<gene>
    <name type="ordered locus">CPn_0488</name>
    <name type="ordered locus">CP_0266</name>
    <name type="ordered locus">CPj0488</name>
    <name type="ordered locus">CpB0508</name>
</gene>
<accession>Q9Z863</accession>
<accession>Q9JQI9</accession>
<accession>Q9K2A9</accession>
<sequence>MTVFKQIIDGLIDCEKVFENENFIAIKDRFPQAPVHLLIIPKKPIPRFQDIPGDEMILMAEAGKIVQELAAEFGIADGYRVVINNGAEGGQAVFHLHIHLLGGRPLGAIA</sequence>
<proteinExistence type="predicted"/>
<feature type="chain" id="PRO_0000109816" description="HIT-like protein CPn_0488/CP_0266/CPj0488/CpB0508">
    <location>
        <begin position="1"/>
        <end position="110"/>
    </location>
</feature>
<feature type="domain" description="HIT" evidence="1">
    <location>
        <begin position="3"/>
        <end position="110"/>
    </location>
</feature>
<feature type="short sequence motif" description="Histidine triad motif">
    <location>
        <begin position="95"/>
        <end position="99"/>
    </location>
</feature>
<protein>
    <recommendedName>
        <fullName>HIT-like protein CPn_0488/CP_0266/CPj0488/CpB0508</fullName>
    </recommendedName>
</protein>
<comment type="sequence caution" evidence="2">
    <conflict type="erroneous initiation">
        <sequence resource="EMBL-CDS" id="AAF73650"/>
    </conflict>
</comment>
<organism>
    <name type="scientific">Chlamydia pneumoniae</name>
    <name type="common">Chlamydophila pneumoniae</name>
    <dbReference type="NCBI Taxonomy" id="83558"/>
    <lineage>
        <taxon>Bacteria</taxon>
        <taxon>Pseudomonadati</taxon>
        <taxon>Chlamydiota</taxon>
        <taxon>Chlamydiia</taxon>
        <taxon>Chlamydiales</taxon>
        <taxon>Chlamydiaceae</taxon>
        <taxon>Chlamydia/Chlamydophila group</taxon>
        <taxon>Chlamydia</taxon>
    </lineage>
</organism>
<reference key="1">
    <citation type="journal article" date="1999" name="Nat. Genet.">
        <title>Comparative genomes of Chlamydia pneumoniae and C. trachomatis.</title>
        <authorList>
            <person name="Kalman S."/>
            <person name="Mitchell W.P."/>
            <person name="Marathe R."/>
            <person name="Lammel C.J."/>
            <person name="Fan J."/>
            <person name="Hyman R.W."/>
            <person name="Olinger L."/>
            <person name="Grimwood J."/>
            <person name="Davis R.W."/>
            <person name="Stephens R.S."/>
        </authorList>
    </citation>
    <scope>NUCLEOTIDE SEQUENCE [LARGE SCALE GENOMIC DNA]</scope>
    <source>
        <strain>CWL029</strain>
    </source>
</reference>
<reference key="2">
    <citation type="journal article" date="2000" name="Nucleic Acids Res.">
        <title>Genome sequences of Chlamydia trachomatis MoPn and Chlamydia pneumoniae AR39.</title>
        <authorList>
            <person name="Read T.D."/>
            <person name="Brunham R.C."/>
            <person name="Shen C."/>
            <person name="Gill S.R."/>
            <person name="Heidelberg J.F."/>
            <person name="White O."/>
            <person name="Hickey E.K."/>
            <person name="Peterson J.D."/>
            <person name="Utterback T.R."/>
            <person name="Berry K.J."/>
            <person name="Bass S."/>
            <person name="Linher K.D."/>
            <person name="Weidman J.F."/>
            <person name="Khouri H.M."/>
            <person name="Craven B."/>
            <person name="Bowman C."/>
            <person name="Dodson R.J."/>
            <person name="Gwinn M.L."/>
            <person name="Nelson W.C."/>
            <person name="DeBoy R.T."/>
            <person name="Kolonay J.F."/>
            <person name="McClarty G."/>
            <person name="Salzberg S.L."/>
            <person name="Eisen J.A."/>
            <person name="Fraser C.M."/>
        </authorList>
    </citation>
    <scope>NUCLEOTIDE SEQUENCE [LARGE SCALE GENOMIC DNA]</scope>
    <source>
        <strain>AR39</strain>
    </source>
</reference>
<reference key="3">
    <citation type="journal article" date="2000" name="Nucleic Acids Res.">
        <title>Comparison of whole genome sequences of Chlamydia pneumoniae J138 from Japan and CWL029 from USA.</title>
        <authorList>
            <person name="Shirai M."/>
            <person name="Hirakawa H."/>
            <person name="Kimoto M."/>
            <person name="Tabuchi M."/>
            <person name="Kishi F."/>
            <person name="Ouchi K."/>
            <person name="Shiba T."/>
            <person name="Ishii K."/>
            <person name="Hattori M."/>
            <person name="Kuhara S."/>
            <person name="Nakazawa T."/>
        </authorList>
    </citation>
    <scope>NUCLEOTIDE SEQUENCE [LARGE SCALE GENOMIC DNA]</scope>
    <source>
        <strain>J138</strain>
    </source>
</reference>
<reference key="4">
    <citation type="submission" date="2002-05" db="EMBL/GenBank/DDBJ databases">
        <title>The genome sequence of Chlamydia pneumoniae TW183 and comparison with other Chlamydia strains based on whole genome sequence analysis.</title>
        <authorList>
            <person name="Geng M.M."/>
            <person name="Schuhmacher A."/>
            <person name="Muehldorfer I."/>
            <person name="Bensch K.W."/>
            <person name="Schaefer K.P."/>
            <person name="Schneider S."/>
            <person name="Pohl T."/>
            <person name="Essig A."/>
            <person name="Marre R."/>
            <person name="Melchers K."/>
        </authorList>
    </citation>
    <scope>NUCLEOTIDE SEQUENCE [LARGE SCALE GENOMIC DNA]</scope>
    <source>
        <strain>TW-183</strain>
    </source>
</reference>